<protein>
    <recommendedName>
        <fullName>Zinc finger Y-chromosomal protein</fullName>
    </recommendedName>
</protein>
<keyword id="KW-0010">Activator</keyword>
<keyword id="KW-0238">DNA-binding</keyword>
<keyword id="KW-0479">Metal-binding</keyword>
<keyword id="KW-0539">Nucleus</keyword>
<keyword id="KW-0597">Phosphoprotein</keyword>
<keyword id="KW-1185">Reference proteome</keyword>
<keyword id="KW-0677">Repeat</keyword>
<keyword id="KW-0804">Transcription</keyword>
<keyword id="KW-0805">Transcription regulation</keyword>
<keyword id="KW-0862">Zinc</keyword>
<keyword id="KW-0863">Zinc-finger</keyword>
<comment type="function">
    <text evidence="1">Probable transcriptional activator. Binds to the consensus sequence 5'-AGGCCY-3' (By similarity).</text>
</comment>
<comment type="subcellular location">
    <subcellularLocation>
        <location evidence="1">Nucleus</location>
    </subcellularLocation>
</comment>
<comment type="domain">
    <text evidence="1">The binding of ZFY to DNA is mediated by the interaction of the GGCC core base pairs with zinc fingers 12 and 13.</text>
</comment>
<comment type="similarity">
    <text evidence="4">Belongs to the krueppel C2H2-type zinc-finger protein family. ZFX/ZFY subfamily.</text>
</comment>
<reference key="1">
    <citation type="submission" date="1997-11" db="EMBL/GenBank/DDBJ databases">
        <title>Bovine ZFX and ZFY genes reveal extensive similarity to human zinc finger protein genes.</title>
        <authorList>
            <person name="Poloumienko A."/>
            <person name="Blecher S."/>
        </authorList>
    </citation>
    <scope>NUCLEOTIDE SEQUENCE [MRNA]</scope>
</reference>
<organism>
    <name type="scientific">Bos taurus</name>
    <name type="common">Bovine</name>
    <dbReference type="NCBI Taxonomy" id="9913"/>
    <lineage>
        <taxon>Eukaryota</taxon>
        <taxon>Metazoa</taxon>
        <taxon>Chordata</taxon>
        <taxon>Craniata</taxon>
        <taxon>Vertebrata</taxon>
        <taxon>Euteleostomi</taxon>
        <taxon>Mammalia</taxon>
        <taxon>Eutheria</taxon>
        <taxon>Laurasiatheria</taxon>
        <taxon>Artiodactyla</taxon>
        <taxon>Ruminantia</taxon>
        <taxon>Pecora</taxon>
        <taxon>Bovidae</taxon>
        <taxon>Bovinae</taxon>
        <taxon>Bos</taxon>
    </lineage>
</organism>
<feature type="chain" id="PRO_0000250510" description="Zinc finger Y-chromosomal protein">
    <location>
        <begin position="1"/>
        <end position="801"/>
    </location>
</feature>
<feature type="zinc finger region" description="C2H2-type 1" evidence="3">
    <location>
        <begin position="421"/>
        <end position="443"/>
    </location>
</feature>
<feature type="zinc finger region" description="C2H2-type 2; atypical" evidence="3">
    <location>
        <begin position="452"/>
        <end position="474"/>
    </location>
</feature>
<feature type="zinc finger region" description="C2H2-type 3" evidence="3">
    <location>
        <begin position="484"/>
        <end position="506"/>
    </location>
</feature>
<feature type="zinc finger region" description="C2H2-type 4" evidence="3">
    <location>
        <begin position="515"/>
        <end position="538"/>
    </location>
</feature>
<feature type="zinc finger region" description="C2H2-type 5" evidence="3">
    <location>
        <begin position="544"/>
        <end position="566"/>
    </location>
</feature>
<feature type="zinc finger region" description="C2H2-type 6" evidence="3">
    <location>
        <begin position="572"/>
        <end position="595"/>
    </location>
</feature>
<feature type="zinc finger region" description="C2H2-type 7" evidence="3">
    <location>
        <begin position="601"/>
        <end position="623"/>
    </location>
</feature>
<feature type="zinc finger region" description="C2H2-type 8" evidence="3">
    <location>
        <begin position="629"/>
        <end position="652"/>
    </location>
</feature>
<feature type="zinc finger region" description="C2H2-type 9" evidence="3">
    <location>
        <begin position="658"/>
        <end position="680"/>
    </location>
</feature>
<feature type="zinc finger region" description="C2H2-type 10" evidence="3">
    <location>
        <begin position="686"/>
        <end position="709"/>
    </location>
</feature>
<feature type="zinc finger region" description="C2H2-type 11" evidence="3">
    <location>
        <begin position="715"/>
        <end position="737"/>
    </location>
</feature>
<feature type="zinc finger region" description="C2H2-type 12" evidence="3">
    <location>
        <begin position="743"/>
        <end position="766"/>
    </location>
</feature>
<feature type="zinc finger region" description="C2H2-type 13" evidence="3">
    <location>
        <begin position="772"/>
        <end position="795"/>
    </location>
</feature>
<feature type="modified residue" description="Phosphoserine" evidence="2">
    <location>
        <position position="269"/>
    </location>
</feature>
<gene>
    <name type="primary">ZFY</name>
</gene>
<proteinExistence type="evidence at transcript level"/>
<sequence length="801" mass="90344">MDEDEFELQPQEPNSCFDGIGTDATHMDGDQIVVEVQETVFVSDVVDSDITVHNFVPDDPDSVVIQDVIENVVIEDVQCSDILEEADVSENVIIPEQMLSSDVTEEVSLAHCTVPDDVLASDITSASMSMPEHVLTSESVHVSDVGHVEHIVHGSVVEAEIVTDPLTADVVSEEVLVADCASEAVIDANGIPVDQQDDDKGNCEDYLMISLDDDGKMEHDCSSGMTMDAESEIDPCKVDGTCPEVIKVYIFKADPGEDDLGGTVDIVESEPENDHGVELLDQNNSIRMPREKMVYMTVNDSQQEDEDLNVAEIADEVYMEVIVGEEDAAVAAAAATTVHEQEMDDSEIKTFMPIAWAAAYGNNSDGIENRSGTASALLHIDESAGLGRLTKHKPKKRRRPDSRQYQTAIIIGPDGHPLTVYPCMICGKKFKSRGFLKRHMKNHPEHLTKKKYRCTDCDYTTNKKISLHNHLESHKLTSKSEKAIECDDCGKHFSHAGALFTHKMVHKEKGASKMHKCKFCEYETAEQGLLNRHLLAVHSKNFPHICVECGKGFRHPSELKKHMRIHTGEKPYQCQYCEYRSADSSNLKTHVKTKHSKEMSFKCDICLLTFSDTKEVQQHALIHQESKTHQCVHCDHKSSNSSDLKRHIISVHTKDYPHKCDMCDKGFHRPSELKKHVAAHKGKKMHQCRHCDFKIADPFVLSRHILSVHTKDLPFRCKRCKKGFRQQNELKKHMKTHSGRKVYQCEYCEYSTTDASGFKRHVISIHTKDYPHRCEYCKKGFRRPSEKNQHITRHHKEVGLP</sequence>
<evidence type="ECO:0000250" key="1"/>
<evidence type="ECO:0000250" key="2">
    <source>
        <dbReference type="UniProtKB" id="P17012"/>
    </source>
</evidence>
<evidence type="ECO:0000255" key="3">
    <source>
        <dbReference type="PROSITE-ProRule" id="PRU00042"/>
    </source>
</evidence>
<evidence type="ECO:0000305" key="4"/>
<accession>Q95LI3</accession>
<name>ZFY_BOVIN</name>
<dbReference type="EMBL" id="AF032867">
    <property type="protein sequence ID" value="AAL18261.1"/>
    <property type="molecule type" value="mRNA"/>
</dbReference>
<dbReference type="RefSeq" id="NP_803457.1">
    <property type="nucleotide sequence ID" value="NM_177491.1"/>
</dbReference>
<dbReference type="SMR" id="Q95LI3"/>
<dbReference type="FunCoup" id="Q95LI3">
    <property type="interactions" value="2"/>
</dbReference>
<dbReference type="GeneID" id="280962"/>
<dbReference type="KEGG" id="bta:280962"/>
<dbReference type="CTD" id="7544"/>
<dbReference type="InParanoid" id="Q95LI3"/>
<dbReference type="Proteomes" id="UP000009136">
    <property type="component" value="Unplaced"/>
</dbReference>
<dbReference type="GO" id="GO:0005694">
    <property type="term" value="C:chromosome"/>
    <property type="evidence" value="ECO:0000318"/>
    <property type="project" value="GO_Central"/>
</dbReference>
<dbReference type="GO" id="GO:0005634">
    <property type="term" value="C:nucleus"/>
    <property type="evidence" value="ECO:0007669"/>
    <property type="project" value="UniProtKB-SubCell"/>
</dbReference>
<dbReference type="GO" id="GO:0043035">
    <property type="term" value="F:chromatin insulator sequence binding"/>
    <property type="evidence" value="ECO:0000318"/>
    <property type="project" value="GO_Central"/>
</dbReference>
<dbReference type="GO" id="GO:0008270">
    <property type="term" value="F:zinc ion binding"/>
    <property type="evidence" value="ECO:0007669"/>
    <property type="project" value="UniProtKB-KW"/>
</dbReference>
<dbReference type="GO" id="GO:0006357">
    <property type="term" value="P:regulation of transcription by RNA polymerase II"/>
    <property type="evidence" value="ECO:0000318"/>
    <property type="project" value="GO_Central"/>
</dbReference>
<dbReference type="FunFam" id="3.30.160.60:FF:000054">
    <property type="entry name" value="Zinc finger protein 711"/>
    <property type="match status" value="1"/>
</dbReference>
<dbReference type="FunFam" id="3.30.160.60:FF:000209">
    <property type="entry name" value="Zinc finger protein 711"/>
    <property type="match status" value="3"/>
</dbReference>
<dbReference type="FunFam" id="3.30.160.60:FF:000170">
    <property type="entry name" value="Zinc finger protein 711 isoform X2"/>
    <property type="match status" value="1"/>
</dbReference>
<dbReference type="FunFam" id="3.30.160.60:FF:000607">
    <property type="entry name" value="zinc finger X-chromosomal protein-like isoform X1"/>
    <property type="match status" value="1"/>
</dbReference>
<dbReference type="FunFam" id="3.30.160.60:FF:000461">
    <property type="entry name" value="Zinc finger X-chromosomal protein-like protein"/>
    <property type="match status" value="1"/>
</dbReference>
<dbReference type="Gene3D" id="3.30.160.60">
    <property type="entry name" value="Classic Zinc Finger"/>
    <property type="match status" value="8"/>
</dbReference>
<dbReference type="InterPro" id="IPR006794">
    <property type="entry name" value="Transcrp_activ_Zfx/Zfy-dom"/>
</dbReference>
<dbReference type="InterPro" id="IPR036236">
    <property type="entry name" value="Znf_C2H2_sf"/>
</dbReference>
<dbReference type="InterPro" id="IPR013087">
    <property type="entry name" value="Znf_C2H2_type"/>
</dbReference>
<dbReference type="PANTHER" id="PTHR24381:SF393">
    <property type="entry name" value="CHROMATIN-LINKED ADAPTOR FOR MSL PROTEINS, ISOFORM B"/>
    <property type="match status" value="1"/>
</dbReference>
<dbReference type="PANTHER" id="PTHR24381">
    <property type="entry name" value="ZINC FINGER PROTEIN"/>
    <property type="match status" value="1"/>
</dbReference>
<dbReference type="Pfam" id="PF00096">
    <property type="entry name" value="zf-C2H2"/>
    <property type="match status" value="6"/>
</dbReference>
<dbReference type="Pfam" id="PF13909">
    <property type="entry name" value="zf-H2C2_5"/>
    <property type="match status" value="1"/>
</dbReference>
<dbReference type="Pfam" id="PF04704">
    <property type="entry name" value="Zfx_Zfy_act"/>
    <property type="match status" value="1"/>
</dbReference>
<dbReference type="SMART" id="SM00355">
    <property type="entry name" value="ZnF_C2H2"/>
    <property type="match status" value="13"/>
</dbReference>
<dbReference type="SUPFAM" id="SSF57667">
    <property type="entry name" value="beta-beta-alpha zinc fingers"/>
    <property type="match status" value="7"/>
</dbReference>
<dbReference type="PROSITE" id="PS00028">
    <property type="entry name" value="ZINC_FINGER_C2H2_1"/>
    <property type="match status" value="8"/>
</dbReference>
<dbReference type="PROSITE" id="PS50157">
    <property type="entry name" value="ZINC_FINGER_C2H2_2"/>
    <property type="match status" value="13"/>
</dbReference>